<proteinExistence type="inferred from homology"/>
<organism>
    <name type="scientific">Aspergillus fumigatus (strain CBS 144.89 / FGSC A1163 / CEA10)</name>
    <name type="common">Neosartorya fumigata</name>
    <dbReference type="NCBI Taxonomy" id="451804"/>
    <lineage>
        <taxon>Eukaryota</taxon>
        <taxon>Fungi</taxon>
        <taxon>Dikarya</taxon>
        <taxon>Ascomycota</taxon>
        <taxon>Pezizomycotina</taxon>
        <taxon>Eurotiomycetes</taxon>
        <taxon>Eurotiomycetidae</taxon>
        <taxon>Eurotiales</taxon>
        <taxon>Aspergillaceae</taxon>
        <taxon>Aspergillus</taxon>
        <taxon>Aspergillus subgen. Fumigati</taxon>
    </lineage>
</organism>
<sequence>MKSTFGLLALAAAAKLVSAHATVHAVWINDVDQGAGNSADGYIRSPPNNSPITDVTSTDMTCNVNGKNPVAKTLSVKAGDKVTFEWHHDTRSDSDDIIASSHMGPVMVYMAPTEKGTAGNGWVKIAEEGYSNGKWAVANLIANRGKHSITVPDVPAGEYLLRPEIIALHEGNRQGGAQFYMECVQVKVTSAGTKTLPAGVSIPGAYKATDPGVLFDMYNSFTSYPIPGPAVWDGSSSGSSGSSGSSPATTTAPAVSVTAVPTKEAPVDTSATPTTFVTATKPATTAAPAAPSASSGSNSGSDSCNSGSASGSVKIYGQCGGQNYSGPTSCEAGLICKEWNPYYHQCVSA</sequence>
<evidence type="ECO:0000250" key="1">
    <source>
        <dbReference type="UniProtKB" id="A0A223GEC9"/>
    </source>
</evidence>
<evidence type="ECO:0000250" key="2">
    <source>
        <dbReference type="UniProtKB" id="Q1K8B6"/>
    </source>
</evidence>
<evidence type="ECO:0000250" key="3">
    <source>
        <dbReference type="UniProtKB" id="Q2US83"/>
    </source>
</evidence>
<evidence type="ECO:0000250" key="4">
    <source>
        <dbReference type="UniProtKB" id="Q4WP32"/>
    </source>
</evidence>
<evidence type="ECO:0000250" key="5">
    <source>
        <dbReference type="UniProtKB" id="Q7S439"/>
    </source>
</evidence>
<evidence type="ECO:0000255" key="6"/>
<evidence type="ECO:0000255" key="7">
    <source>
        <dbReference type="PROSITE-ProRule" id="PRU00597"/>
    </source>
</evidence>
<evidence type="ECO:0000256" key="8">
    <source>
        <dbReference type="SAM" id="MobiDB-lite"/>
    </source>
</evidence>
<evidence type="ECO:0000305" key="9"/>
<comment type="function">
    <text evidence="3">Lytic polysaccharide monooxygenase (LPMO) that depolymerizes crystalline and amorphous polysaccharides via the oxidation of scissile alpha- or beta-(1-4)-glycosidic bonds, yielding C4 oxidation products (By similarity). Catalysis by LPMOs requires the reduction of the active-site copper from Cu(II) to Cu(I) by a reducing agent and H(2)O(2) or O(2) as a cosubstrate (By similarity).</text>
</comment>
<comment type="catalytic activity">
    <reaction evidence="3">
        <text>[(1-&gt;4)-beta-D-glucosyl]n+m + reduced acceptor + O2 = 4-dehydro-beta-D-glucosyl-[(1-&gt;4)-beta-D-glucosyl]n-1 + [(1-&gt;4)-beta-D-glucosyl]m + acceptor + H2O.</text>
        <dbReference type="EC" id="1.14.99.56"/>
    </reaction>
</comment>
<comment type="cofactor">
    <cofactor evidence="4">
        <name>Cu(2+)</name>
        <dbReference type="ChEBI" id="CHEBI:29036"/>
    </cofactor>
    <text evidence="4">Binds 1 copper ion per subunit.</text>
</comment>
<comment type="subcellular location">
    <subcellularLocation>
        <location evidence="3">Secreted</location>
    </subcellularLocation>
</comment>
<comment type="domain">
    <text evidence="5">Has a modular structure: an endo-beta-1,4-glucanase catalytic module at the N-terminus, a linker rich in serines and threonines, and a C-terminal carbohydrate-binding module (CBM). The CBM domain is essential for binding to and subsequent oxidative degradation of polysaccharide substrate.</text>
</comment>
<comment type="biotechnology">
    <text evidence="4">Lignocellulose is the most abundant polymeric composite on Earth and is a recalcitrant but promising renewable substrate for industrial biotechnology applications. Together with cellobiose dehydrogenases (CDHs) an enzymatic system capable of oxidative cellulose cleavage is formed, which increases the efficiency of cellulases and put LPMOs at focus of biofuel research.</text>
</comment>
<comment type="similarity">
    <text evidence="9">Belongs to the polysaccharide monooxygenase AA9 family.</text>
</comment>
<gene>
    <name type="primary">eglD</name>
    <name type="ORF">AFUB_080950</name>
</gene>
<feature type="signal peptide" evidence="6">
    <location>
        <begin position="1"/>
        <end position="19"/>
    </location>
</feature>
<feature type="chain" id="PRO_0000394061" description="AA9 family lytic polysaccharide monooxygenase A">
    <location>
        <begin position="20"/>
        <end position="349"/>
    </location>
</feature>
<feature type="domain" description="CBM1" evidence="7">
    <location>
        <begin position="311"/>
        <end position="347"/>
    </location>
</feature>
<feature type="region of interest" description="Disordered" evidence="8">
    <location>
        <begin position="233"/>
        <end position="304"/>
    </location>
</feature>
<feature type="compositionally biased region" description="Low complexity" evidence="8">
    <location>
        <begin position="234"/>
        <end position="262"/>
    </location>
</feature>
<feature type="compositionally biased region" description="Low complexity" evidence="8">
    <location>
        <begin position="269"/>
        <end position="304"/>
    </location>
</feature>
<feature type="binding site" evidence="1">
    <location>
        <position position="20"/>
    </location>
    <ligand>
        <name>Cu(2+)</name>
        <dbReference type="ChEBI" id="CHEBI:29036"/>
        <note>catalytic</note>
    </ligand>
</feature>
<feature type="binding site" evidence="1">
    <location>
        <position position="102"/>
    </location>
    <ligand>
        <name>Cu(2+)</name>
        <dbReference type="ChEBI" id="CHEBI:29036"/>
        <note>catalytic</note>
    </ligand>
</feature>
<feature type="binding site" evidence="2">
    <location>
        <position position="169"/>
    </location>
    <ligand>
        <name>O2</name>
        <dbReference type="ChEBI" id="CHEBI:15379"/>
    </ligand>
</feature>
<feature type="binding site" evidence="1">
    <location>
        <position position="180"/>
    </location>
    <ligand>
        <name>Cu(2+)</name>
        <dbReference type="ChEBI" id="CHEBI:29036"/>
        <note>catalytic</note>
    </ligand>
</feature>
<feature type="glycosylation site" description="N-linked (GlcNAc...) asparagine" evidence="6">
    <location>
        <position position="323"/>
    </location>
</feature>
<feature type="disulfide bond" evidence="1">
    <location>
        <begin position="62"/>
        <end position="183"/>
    </location>
</feature>
<accession>B0Y9G4</accession>
<protein>
    <recommendedName>
        <fullName evidence="3">AA9 family lytic polysaccharide monooxygenase A</fullName>
        <shortName evidence="3">AgA9A</shortName>
        <ecNumber evidence="3">1.14.99.56</ecNumber>
    </recommendedName>
    <alternativeName>
        <fullName evidence="9">Cellulase AA9A</fullName>
    </alternativeName>
    <alternativeName>
        <fullName evidence="9">Endo-beta-1,4-glucanase AA9A</fullName>
        <shortName evidence="9">Endoglucanase AA9A</shortName>
    </alternativeName>
    <alternativeName>
        <fullName evidence="9">Glycosyl hydrolase 61 family protein AA9A</fullName>
    </alternativeName>
</protein>
<reference key="1">
    <citation type="journal article" date="2008" name="PLoS Genet.">
        <title>Genomic islands in the pathogenic filamentous fungus Aspergillus fumigatus.</title>
        <authorList>
            <person name="Fedorova N.D."/>
            <person name="Khaldi N."/>
            <person name="Joardar V.S."/>
            <person name="Maiti R."/>
            <person name="Amedeo P."/>
            <person name="Anderson M.J."/>
            <person name="Crabtree J."/>
            <person name="Silva J.C."/>
            <person name="Badger J.H."/>
            <person name="Albarraq A."/>
            <person name="Angiuoli S."/>
            <person name="Bussey H."/>
            <person name="Bowyer P."/>
            <person name="Cotty P.J."/>
            <person name="Dyer P.S."/>
            <person name="Egan A."/>
            <person name="Galens K."/>
            <person name="Fraser-Liggett C.M."/>
            <person name="Haas B.J."/>
            <person name="Inman J.M."/>
            <person name="Kent R."/>
            <person name="Lemieux S."/>
            <person name="Malavazi I."/>
            <person name="Orvis J."/>
            <person name="Roemer T."/>
            <person name="Ronning C.M."/>
            <person name="Sundaram J.P."/>
            <person name="Sutton G."/>
            <person name="Turner G."/>
            <person name="Venter J.C."/>
            <person name="White O.R."/>
            <person name="Whitty B.R."/>
            <person name="Youngman P."/>
            <person name="Wolfe K.H."/>
            <person name="Goldman G.H."/>
            <person name="Wortman J.R."/>
            <person name="Jiang B."/>
            <person name="Denning D.W."/>
            <person name="Nierman W.C."/>
        </authorList>
    </citation>
    <scope>NUCLEOTIDE SEQUENCE [LARGE SCALE GENOMIC DNA]</scope>
    <source>
        <strain>CBS 144.89 / FGSC A1163 / CEA10</strain>
    </source>
</reference>
<keyword id="KW-0119">Carbohydrate metabolism</keyword>
<keyword id="KW-0136">Cellulose degradation</keyword>
<keyword id="KW-0186">Copper</keyword>
<keyword id="KW-1015">Disulfide bond</keyword>
<keyword id="KW-0325">Glycoprotein</keyword>
<keyword id="KW-0479">Metal-binding</keyword>
<keyword id="KW-0503">Monooxygenase</keyword>
<keyword id="KW-0560">Oxidoreductase</keyword>
<keyword id="KW-0624">Polysaccharide degradation</keyword>
<keyword id="KW-0964">Secreted</keyword>
<keyword id="KW-0732">Signal</keyword>
<dbReference type="EC" id="1.14.99.56" evidence="3"/>
<dbReference type="EMBL" id="DS499600">
    <property type="protein sequence ID" value="EDP48657.1"/>
    <property type="molecule type" value="Genomic_DNA"/>
</dbReference>
<dbReference type="SMR" id="B0Y9G4"/>
<dbReference type="GlyCosmos" id="B0Y9G4">
    <property type="glycosylation" value="1 site, No reported glycans"/>
</dbReference>
<dbReference type="EnsemblFungi" id="EDP48657">
    <property type="protein sequence ID" value="EDP48657"/>
    <property type="gene ID" value="AFUB_080950"/>
</dbReference>
<dbReference type="VEuPathDB" id="FungiDB:AFUB_080950"/>
<dbReference type="HOGENOM" id="CLU_031730_0_0_1"/>
<dbReference type="OrthoDB" id="114209at5052"/>
<dbReference type="PhylomeDB" id="B0Y9G4"/>
<dbReference type="Proteomes" id="UP000001699">
    <property type="component" value="Unassembled WGS sequence"/>
</dbReference>
<dbReference type="GO" id="GO:0005576">
    <property type="term" value="C:extracellular region"/>
    <property type="evidence" value="ECO:0007669"/>
    <property type="project" value="UniProtKB-SubCell"/>
</dbReference>
<dbReference type="GO" id="GO:0008810">
    <property type="term" value="F:cellulase activity"/>
    <property type="evidence" value="ECO:0007669"/>
    <property type="project" value="UniProtKB-EC"/>
</dbReference>
<dbReference type="GO" id="GO:0030248">
    <property type="term" value="F:cellulose binding"/>
    <property type="evidence" value="ECO:0007669"/>
    <property type="project" value="InterPro"/>
</dbReference>
<dbReference type="GO" id="GO:0046872">
    <property type="term" value="F:metal ion binding"/>
    <property type="evidence" value="ECO:0007669"/>
    <property type="project" value="UniProtKB-KW"/>
</dbReference>
<dbReference type="GO" id="GO:0004497">
    <property type="term" value="F:monooxygenase activity"/>
    <property type="evidence" value="ECO:0007669"/>
    <property type="project" value="UniProtKB-KW"/>
</dbReference>
<dbReference type="GO" id="GO:0030245">
    <property type="term" value="P:cellulose catabolic process"/>
    <property type="evidence" value="ECO:0007669"/>
    <property type="project" value="UniProtKB-KW"/>
</dbReference>
<dbReference type="CDD" id="cd21175">
    <property type="entry name" value="LPMO_AA9"/>
    <property type="match status" value="1"/>
</dbReference>
<dbReference type="Gene3D" id="2.70.50.70">
    <property type="match status" value="1"/>
</dbReference>
<dbReference type="InterPro" id="IPR049892">
    <property type="entry name" value="AA9"/>
</dbReference>
<dbReference type="InterPro" id="IPR005103">
    <property type="entry name" value="AA9_LPMO"/>
</dbReference>
<dbReference type="InterPro" id="IPR035971">
    <property type="entry name" value="CBD_sf"/>
</dbReference>
<dbReference type="InterPro" id="IPR000254">
    <property type="entry name" value="Cellulose-bd_dom_fun"/>
</dbReference>
<dbReference type="PANTHER" id="PTHR33353:SF17">
    <property type="entry name" value="ENDO-BETA-1,4-GLUCANASE D"/>
    <property type="match status" value="1"/>
</dbReference>
<dbReference type="PANTHER" id="PTHR33353">
    <property type="entry name" value="PUTATIVE (AFU_ORTHOLOGUE AFUA_1G12560)-RELATED"/>
    <property type="match status" value="1"/>
</dbReference>
<dbReference type="Pfam" id="PF03443">
    <property type="entry name" value="AA9"/>
    <property type="match status" value="1"/>
</dbReference>
<dbReference type="Pfam" id="PF00734">
    <property type="entry name" value="CBM_1"/>
    <property type="match status" value="1"/>
</dbReference>
<dbReference type="SMART" id="SM00236">
    <property type="entry name" value="fCBD"/>
    <property type="match status" value="1"/>
</dbReference>
<dbReference type="SUPFAM" id="SSF57180">
    <property type="entry name" value="Cellulose-binding domain"/>
    <property type="match status" value="1"/>
</dbReference>
<dbReference type="PROSITE" id="PS00562">
    <property type="entry name" value="CBM1_1"/>
    <property type="match status" value="1"/>
</dbReference>
<dbReference type="PROSITE" id="PS51164">
    <property type="entry name" value="CBM1_2"/>
    <property type="match status" value="1"/>
</dbReference>
<name>LP9A_ASPFC</name>